<feature type="chain" id="PRO_5000470194" description="NADH-quinone oxidoreductase subunit K">
    <location>
        <begin position="1"/>
        <end position="104"/>
    </location>
</feature>
<feature type="transmembrane region" description="Helical" evidence="1">
    <location>
        <begin position="4"/>
        <end position="24"/>
    </location>
</feature>
<feature type="transmembrane region" description="Helical" evidence="1">
    <location>
        <begin position="31"/>
        <end position="51"/>
    </location>
</feature>
<feature type="transmembrane region" description="Helical" evidence="1">
    <location>
        <begin position="64"/>
        <end position="84"/>
    </location>
</feature>
<proteinExistence type="inferred from homology"/>
<name>NUOK_GEOSW</name>
<reference key="1">
    <citation type="submission" date="2009-06" db="EMBL/GenBank/DDBJ databases">
        <title>Complete sequence of chromosome of Geopacillus sp. WCH70.</title>
        <authorList>
            <consortium name="US DOE Joint Genome Institute"/>
            <person name="Lucas S."/>
            <person name="Copeland A."/>
            <person name="Lapidus A."/>
            <person name="Glavina del Rio T."/>
            <person name="Dalin E."/>
            <person name="Tice H."/>
            <person name="Bruce D."/>
            <person name="Goodwin L."/>
            <person name="Pitluck S."/>
            <person name="Chertkov O."/>
            <person name="Brettin T."/>
            <person name="Detter J.C."/>
            <person name="Han C."/>
            <person name="Larimer F."/>
            <person name="Land M."/>
            <person name="Hauser L."/>
            <person name="Kyrpides N."/>
            <person name="Mikhailova N."/>
            <person name="Brumm P."/>
            <person name="Mead D.A."/>
            <person name="Richardson P."/>
        </authorList>
    </citation>
    <scope>NUCLEOTIDE SEQUENCE [LARGE SCALE GENOMIC DNA]</scope>
    <source>
        <strain>WCH70</strain>
    </source>
</reference>
<gene>
    <name evidence="1" type="primary">nuoK</name>
    <name type="ordered locus">GWCH70_3294</name>
</gene>
<keyword id="KW-1003">Cell membrane</keyword>
<keyword id="KW-0472">Membrane</keyword>
<keyword id="KW-0520">NAD</keyword>
<keyword id="KW-0874">Quinone</keyword>
<keyword id="KW-1278">Translocase</keyword>
<keyword id="KW-0812">Transmembrane</keyword>
<keyword id="KW-1133">Transmembrane helix</keyword>
<keyword id="KW-0813">Transport</keyword>
<comment type="function">
    <text evidence="1">NDH-1 shuttles electrons from NADH, via FMN and iron-sulfur (Fe-S) centers, to quinones in the respiratory chain. The immediate electron acceptor for the enzyme in this species is believed to be a menaquinone. Couples the redox reaction to proton translocation (for every two electrons transferred, four hydrogen ions are translocated across the cytoplasmic membrane), and thus conserves the redox energy in a proton gradient.</text>
</comment>
<comment type="catalytic activity">
    <reaction evidence="1">
        <text>a quinone + NADH + 5 H(+)(in) = a quinol + NAD(+) + 4 H(+)(out)</text>
        <dbReference type="Rhea" id="RHEA:57888"/>
        <dbReference type="ChEBI" id="CHEBI:15378"/>
        <dbReference type="ChEBI" id="CHEBI:24646"/>
        <dbReference type="ChEBI" id="CHEBI:57540"/>
        <dbReference type="ChEBI" id="CHEBI:57945"/>
        <dbReference type="ChEBI" id="CHEBI:132124"/>
    </reaction>
</comment>
<comment type="subunit">
    <text evidence="1">NDH-1 is composed of 14 different subunits. Subunits NuoA, H, J, K, L, M, N constitute the membrane sector of the complex.</text>
</comment>
<comment type="subcellular location">
    <subcellularLocation>
        <location evidence="1">Cell membrane</location>
        <topology evidence="1">Multi-pass membrane protein</topology>
    </subcellularLocation>
</comment>
<comment type="similarity">
    <text evidence="1">Belongs to the complex I subunit 4L family.</text>
</comment>
<organism>
    <name type="scientific">Geobacillus sp. (strain WCH70)</name>
    <dbReference type="NCBI Taxonomy" id="471223"/>
    <lineage>
        <taxon>Bacteria</taxon>
        <taxon>Bacillati</taxon>
        <taxon>Bacillota</taxon>
        <taxon>Bacilli</taxon>
        <taxon>Bacillales</taxon>
        <taxon>Anoxybacillaceae</taxon>
        <taxon>Geobacillus</taxon>
    </lineage>
</organism>
<protein>
    <recommendedName>
        <fullName evidence="1">NADH-quinone oxidoreductase subunit K</fullName>
        <ecNumber evidence="1">7.1.1.-</ecNumber>
    </recommendedName>
    <alternativeName>
        <fullName evidence="1">NADH dehydrogenase I subunit K</fullName>
    </alternativeName>
    <alternativeName>
        <fullName evidence="1">NDH-1 subunit K</fullName>
    </alternativeName>
</protein>
<accession>C5D981</accession>
<dbReference type="EC" id="7.1.1.-" evidence="1"/>
<dbReference type="EMBL" id="CP001638">
    <property type="protein sequence ID" value="ACS25934.1"/>
    <property type="molecule type" value="Genomic_DNA"/>
</dbReference>
<dbReference type="SMR" id="C5D981"/>
<dbReference type="STRING" id="471223.GWCH70_3294"/>
<dbReference type="KEGG" id="gwc:GWCH70_3294"/>
<dbReference type="eggNOG" id="COG0713">
    <property type="taxonomic scope" value="Bacteria"/>
</dbReference>
<dbReference type="HOGENOM" id="CLU_144724_0_0_9"/>
<dbReference type="OrthoDB" id="9810120at2"/>
<dbReference type="GO" id="GO:0030964">
    <property type="term" value="C:NADH dehydrogenase complex"/>
    <property type="evidence" value="ECO:0007669"/>
    <property type="project" value="TreeGrafter"/>
</dbReference>
<dbReference type="GO" id="GO:0005886">
    <property type="term" value="C:plasma membrane"/>
    <property type="evidence" value="ECO:0007669"/>
    <property type="project" value="UniProtKB-SubCell"/>
</dbReference>
<dbReference type="GO" id="GO:0050136">
    <property type="term" value="F:NADH:ubiquinone reductase (non-electrogenic) activity"/>
    <property type="evidence" value="ECO:0007669"/>
    <property type="project" value="UniProtKB-UniRule"/>
</dbReference>
<dbReference type="GO" id="GO:0048038">
    <property type="term" value="F:quinone binding"/>
    <property type="evidence" value="ECO:0007669"/>
    <property type="project" value="UniProtKB-KW"/>
</dbReference>
<dbReference type="GO" id="GO:0042773">
    <property type="term" value="P:ATP synthesis coupled electron transport"/>
    <property type="evidence" value="ECO:0007669"/>
    <property type="project" value="InterPro"/>
</dbReference>
<dbReference type="FunFam" id="1.10.287.3510:FF:000001">
    <property type="entry name" value="NADH-quinone oxidoreductase subunit K"/>
    <property type="match status" value="1"/>
</dbReference>
<dbReference type="Gene3D" id="1.10.287.3510">
    <property type="match status" value="1"/>
</dbReference>
<dbReference type="HAMAP" id="MF_01456">
    <property type="entry name" value="NDH1_NuoK"/>
    <property type="match status" value="1"/>
</dbReference>
<dbReference type="InterPro" id="IPR001133">
    <property type="entry name" value="NADH_UbQ_OxRdtase_chain4L/K"/>
</dbReference>
<dbReference type="InterPro" id="IPR039428">
    <property type="entry name" value="NUOK/Mnh_C1-like"/>
</dbReference>
<dbReference type="NCBIfam" id="NF004320">
    <property type="entry name" value="PRK05715.1-2"/>
    <property type="match status" value="1"/>
</dbReference>
<dbReference type="NCBIfam" id="NF004321">
    <property type="entry name" value="PRK05715.1-3"/>
    <property type="match status" value="1"/>
</dbReference>
<dbReference type="NCBIfam" id="NF004322">
    <property type="entry name" value="PRK05715.1-4"/>
    <property type="match status" value="1"/>
</dbReference>
<dbReference type="NCBIfam" id="NF004323">
    <property type="entry name" value="PRK05715.1-5"/>
    <property type="match status" value="1"/>
</dbReference>
<dbReference type="PANTHER" id="PTHR11434:SF16">
    <property type="entry name" value="NADH-UBIQUINONE OXIDOREDUCTASE CHAIN 4L"/>
    <property type="match status" value="1"/>
</dbReference>
<dbReference type="PANTHER" id="PTHR11434">
    <property type="entry name" value="NADH-UBIQUINONE OXIDOREDUCTASE SUBUNIT ND4L"/>
    <property type="match status" value="1"/>
</dbReference>
<dbReference type="Pfam" id="PF00420">
    <property type="entry name" value="Oxidored_q2"/>
    <property type="match status" value="1"/>
</dbReference>
<evidence type="ECO:0000255" key="1">
    <source>
        <dbReference type="HAMAP-Rule" id="MF_01456"/>
    </source>
</evidence>
<sequence>MSSVPLSVYLVLALILFCIGLYGALTKRNTVIVLICIELMLNAVNINLVAFAKYGAHPGIAGQIFALFTITVAAAEAAVGLAILMALYRNRKTVHIDEIDSMKH</sequence>